<reference key="1">
    <citation type="submission" date="2008-04" db="EMBL/GenBank/DDBJ databases">
        <title>Complete sequence of Yersinia pseudotuberculosis PB1/+.</title>
        <authorList>
            <person name="Copeland A."/>
            <person name="Lucas S."/>
            <person name="Lapidus A."/>
            <person name="Glavina del Rio T."/>
            <person name="Dalin E."/>
            <person name="Tice H."/>
            <person name="Bruce D."/>
            <person name="Goodwin L."/>
            <person name="Pitluck S."/>
            <person name="Munk A.C."/>
            <person name="Brettin T."/>
            <person name="Detter J.C."/>
            <person name="Han C."/>
            <person name="Tapia R."/>
            <person name="Schmutz J."/>
            <person name="Larimer F."/>
            <person name="Land M."/>
            <person name="Hauser L."/>
            <person name="Challacombe J.F."/>
            <person name="Green L."/>
            <person name="Lindler L.E."/>
            <person name="Nikolich M.P."/>
            <person name="Richardson P."/>
        </authorList>
    </citation>
    <scope>NUCLEOTIDE SEQUENCE [LARGE SCALE GENOMIC DNA]</scope>
    <source>
        <strain>PB1/+</strain>
    </source>
</reference>
<evidence type="ECO:0000255" key="1">
    <source>
        <dbReference type="HAMAP-Rule" id="MF_00152"/>
    </source>
</evidence>
<gene>
    <name evidence="1" type="primary">nfo</name>
    <name type="ordered locus">YPTS_1432</name>
</gene>
<sequence length="285" mass="31672">MKFVGAHVSAAGGVDQAVIRAHELEATAFALFTKNQRQWRAAPLAEDVIEKFKLACEKYGYTSAQILPHDSYLINLGHPVTEALEKSREAFIDELVRCQQLGLSLLNFHPGSHLLQIDEDQCLARIAESINIALDATEGVTAVIENTAGQGSNLGFKFEHLAAIIERVEDKSRVGVCIDTCHAFAAGYDLRTEEDCEHTFAALGKIVGFQYLRGMHLNDAKSEFNSRVDRHHSLGEGNIGKTVFSYIMRDSRFDNIPLILETVNMDIWAEEIAWLKSQAEIEPSL</sequence>
<name>END4_YERPB</name>
<comment type="function">
    <text evidence="1">Endonuclease IV plays a role in DNA repair. It cleaves phosphodiester bonds at apurinic or apyrimidinic (AP) sites, generating a 3'-hydroxyl group and a 5'-terminal sugar phosphate.</text>
</comment>
<comment type="catalytic activity">
    <reaction evidence="1">
        <text>Endonucleolytic cleavage to 5'-phosphooligonucleotide end-products.</text>
        <dbReference type="EC" id="3.1.21.2"/>
    </reaction>
</comment>
<comment type="cofactor">
    <cofactor evidence="1">
        <name>Zn(2+)</name>
        <dbReference type="ChEBI" id="CHEBI:29105"/>
    </cofactor>
    <text evidence="1">Binds 3 Zn(2+) ions.</text>
</comment>
<comment type="similarity">
    <text evidence="1">Belongs to the AP endonuclease 2 family.</text>
</comment>
<dbReference type="EC" id="3.1.21.2" evidence="1"/>
<dbReference type="EMBL" id="CP001048">
    <property type="protein sequence ID" value="ACC88404.1"/>
    <property type="molecule type" value="Genomic_DNA"/>
</dbReference>
<dbReference type="RefSeq" id="WP_002208791.1">
    <property type="nucleotide sequence ID" value="NZ_CP009780.1"/>
</dbReference>
<dbReference type="SMR" id="B2K9J1"/>
<dbReference type="GeneID" id="57977438"/>
<dbReference type="KEGG" id="ypb:YPTS_1432"/>
<dbReference type="PATRIC" id="fig|502801.10.peg.788"/>
<dbReference type="GO" id="GO:0008833">
    <property type="term" value="F:deoxyribonuclease IV (phage-T4-induced) activity"/>
    <property type="evidence" value="ECO:0007669"/>
    <property type="project" value="UniProtKB-UniRule"/>
</dbReference>
<dbReference type="GO" id="GO:0003677">
    <property type="term" value="F:DNA binding"/>
    <property type="evidence" value="ECO:0007669"/>
    <property type="project" value="InterPro"/>
</dbReference>
<dbReference type="GO" id="GO:0003906">
    <property type="term" value="F:DNA-(apurinic or apyrimidinic site) endonuclease activity"/>
    <property type="evidence" value="ECO:0007669"/>
    <property type="project" value="TreeGrafter"/>
</dbReference>
<dbReference type="GO" id="GO:0008081">
    <property type="term" value="F:phosphoric diester hydrolase activity"/>
    <property type="evidence" value="ECO:0007669"/>
    <property type="project" value="TreeGrafter"/>
</dbReference>
<dbReference type="GO" id="GO:0008270">
    <property type="term" value="F:zinc ion binding"/>
    <property type="evidence" value="ECO:0007669"/>
    <property type="project" value="UniProtKB-UniRule"/>
</dbReference>
<dbReference type="GO" id="GO:0006284">
    <property type="term" value="P:base-excision repair"/>
    <property type="evidence" value="ECO:0007669"/>
    <property type="project" value="TreeGrafter"/>
</dbReference>
<dbReference type="CDD" id="cd00019">
    <property type="entry name" value="AP2Ec"/>
    <property type="match status" value="1"/>
</dbReference>
<dbReference type="FunFam" id="3.20.20.150:FF:000001">
    <property type="entry name" value="Probable endonuclease 4"/>
    <property type="match status" value="1"/>
</dbReference>
<dbReference type="Gene3D" id="3.20.20.150">
    <property type="entry name" value="Divalent-metal-dependent TIM barrel enzymes"/>
    <property type="match status" value="1"/>
</dbReference>
<dbReference type="HAMAP" id="MF_00152">
    <property type="entry name" value="Nfo"/>
    <property type="match status" value="1"/>
</dbReference>
<dbReference type="InterPro" id="IPR001719">
    <property type="entry name" value="AP_endonuc_2"/>
</dbReference>
<dbReference type="InterPro" id="IPR018246">
    <property type="entry name" value="AP_endonuc_F2_Zn_BS"/>
</dbReference>
<dbReference type="InterPro" id="IPR036237">
    <property type="entry name" value="Xyl_isomerase-like_sf"/>
</dbReference>
<dbReference type="InterPro" id="IPR013022">
    <property type="entry name" value="Xyl_isomerase-like_TIM-brl"/>
</dbReference>
<dbReference type="NCBIfam" id="TIGR00587">
    <property type="entry name" value="nfo"/>
    <property type="match status" value="1"/>
</dbReference>
<dbReference type="NCBIfam" id="NF002199">
    <property type="entry name" value="PRK01060.1-4"/>
    <property type="match status" value="1"/>
</dbReference>
<dbReference type="PANTHER" id="PTHR21445:SF0">
    <property type="entry name" value="APURINIC-APYRIMIDINIC ENDONUCLEASE"/>
    <property type="match status" value="1"/>
</dbReference>
<dbReference type="PANTHER" id="PTHR21445">
    <property type="entry name" value="ENDONUCLEASE IV ENDODEOXYRIBONUCLEASE IV"/>
    <property type="match status" value="1"/>
</dbReference>
<dbReference type="Pfam" id="PF01261">
    <property type="entry name" value="AP_endonuc_2"/>
    <property type="match status" value="1"/>
</dbReference>
<dbReference type="SMART" id="SM00518">
    <property type="entry name" value="AP2Ec"/>
    <property type="match status" value="1"/>
</dbReference>
<dbReference type="SUPFAM" id="SSF51658">
    <property type="entry name" value="Xylose isomerase-like"/>
    <property type="match status" value="1"/>
</dbReference>
<dbReference type="PROSITE" id="PS00729">
    <property type="entry name" value="AP_NUCLEASE_F2_1"/>
    <property type="match status" value="1"/>
</dbReference>
<dbReference type="PROSITE" id="PS00730">
    <property type="entry name" value="AP_NUCLEASE_F2_2"/>
    <property type="match status" value="1"/>
</dbReference>
<dbReference type="PROSITE" id="PS00731">
    <property type="entry name" value="AP_NUCLEASE_F2_3"/>
    <property type="match status" value="1"/>
</dbReference>
<dbReference type="PROSITE" id="PS51432">
    <property type="entry name" value="AP_NUCLEASE_F2_4"/>
    <property type="match status" value="1"/>
</dbReference>
<protein>
    <recommendedName>
        <fullName evidence="1">Probable endonuclease 4</fullName>
        <ecNumber evidence="1">3.1.21.2</ecNumber>
    </recommendedName>
    <alternativeName>
        <fullName evidence="1">Endodeoxyribonuclease IV</fullName>
    </alternativeName>
    <alternativeName>
        <fullName evidence="1">Endonuclease IV</fullName>
    </alternativeName>
</protein>
<proteinExistence type="inferred from homology"/>
<accession>B2K9J1</accession>
<keyword id="KW-0227">DNA damage</keyword>
<keyword id="KW-0234">DNA repair</keyword>
<keyword id="KW-0255">Endonuclease</keyword>
<keyword id="KW-0378">Hydrolase</keyword>
<keyword id="KW-0479">Metal-binding</keyword>
<keyword id="KW-0540">Nuclease</keyword>
<keyword id="KW-0862">Zinc</keyword>
<feature type="chain" id="PRO_1000096911" description="Probable endonuclease 4">
    <location>
        <begin position="1"/>
        <end position="285"/>
    </location>
</feature>
<feature type="binding site" evidence="1">
    <location>
        <position position="69"/>
    </location>
    <ligand>
        <name>Zn(2+)</name>
        <dbReference type="ChEBI" id="CHEBI:29105"/>
        <label>1</label>
    </ligand>
</feature>
<feature type="binding site" evidence="1">
    <location>
        <position position="109"/>
    </location>
    <ligand>
        <name>Zn(2+)</name>
        <dbReference type="ChEBI" id="CHEBI:29105"/>
        <label>1</label>
    </ligand>
</feature>
<feature type="binding site" evidence="1">
    <location>
        <position position="145"/>
    </location>
    <ligand>
        <name>Zn(2+)</name>
        <dbReference type="ChEBI" id="CHEBI:29105"/>
        <label>1</label>
    </ligand>
</feature>
<feature type="binding site" evidence="1">
    <location>
        <position position="145"/>
    </location>
    <ligand>
        <name>Zn(2+)</name>
        <dbReference type="ChEBI" id="CHEBI:29105"/>
        <label>2</label>
    </ligand>
</feature>
<feature type="binding site" evidence="1">
    <location>
        <position position="179"/>
    </location>
    <ligand>
        <name>Zn(2+)</name>
        <dbReference type="ChEBI" id="CHEBI:29105"/>
        <label>2</label>
    </ligand>
</feature>
<feature type="binding site" evidence="1">
    <location>
        <position position="182"/>
    </location>
    <ligand>
        <name>Zn(2+)</name>
        <dbReference type="ChEBI" id="CHEBI:29105"/>
        <label>3</label>
    </ligand>
</feature>
<feature type="binding site" evidence="1">
    <location>
        <position position="216"/>
    </location>
    <ligand>
        <name>Zn(2+)</name>
        <dbReference type="ChEBI" id="CHEBI:29105"/>
        <label>2</label>
    </ligand>
</feature>
<feature type="binding site" evidence="1">
    <location>
        <position position="229"/>
    </location>
    <ligand>
        <name>Zn(2+)</name>
        <dbReference type="ChEBI" id="CHEBI:29105"/>
        <label>3</label>
    </ligand>
</feature>
<feature type="binding site" evidence="1">
    <location>
        <position position="231"/>
    </location>
    <ligand>
        <name>Zn(2+)</name>
        <dbReference type="ChEBI" id="CHEBI:29105"/>
        <label>3</label>
    </ligand>
</feature>
<feature type="binding site" evidence="1">
    <location>
        <position position="261"/>
    </location>
    <ligand>
        <name>Zn(2+)</name>
        <dbReference type="ChEBI" id="CHEBI:29105"/>
        <label>2</label>
    </ligand>
</feature>
<organism>
    <name type="scientific">Yersinia pseudotuberculosis serotype IB (strain PB1/+)</name>
    <dbReference type="NCBI Taxonomy" id="502801"/>
    <lineage>
        <taxon>Bacteria</taxon>
        <taxon>Pseudomonadati</taxon>
        <taxon>Pseudomonadota</taxon>
        <taxon>Gammaproteobacteria</taxon>
        <taxon>Enterobacterales</taxon>
        <taxon>Yersiniaceae</taxon>
        <taxon>Yersinia</taxon>
    </lineage>
</organism>